<proteinExistence type="evidence at protein level"/>
<feature type="chain" id="PRO_0000462206" description="Winged helix repair factor 1">
    <location>
        <begin position="1"/>
        <end position="260"/>
    </location>
</feature>
<feature type="region of interest" description="Winged helix domain 1" evidence="1">
    <location>
        <begin position="38"/>
        <end position="110"/>
    </location>
</feature>
<feature type="region of interest" description="Winged helix domain 2" evidence="1">
    <location>
        <begin position="126"/>
        <end position="185"/>
    </location>
</feature>
<feature type="region of interest" description="Winged helix domain 3" evidence="1">
    <location>
        <begin position="186"/>
        <end position="260"/>
    </location>
</feature>
<feature type="mutagenesis site" description="Impairs DNA repair." evidence="2">
    <original>RTVVDR</original>
    <variation>AAVVAA</variation>
    <location>
        <begin position="78"/>
        <end position="83"/>
    </location>
</feature>
<feature type="mutagenesis site" description="Impairs DNA repair." evidence="2">
    <original>DR</original>
    <variation>RD</variation>
    <location>
        <begin position="82"/>
        <end position="83"/>
    </location>
</feature>
<feature type="mutagenesis site" description="Strongly impairs DNA binding but has only a minor effect on DNA repair." evidence="2">
    <original>RR</original>
    <variation>AA</variation>
    <location>
        <begin position="206"/>
        <end position="207"/>
    </location>
</feature>
<feature type="mutagenesis site" description="Severely defective DNA repair." evidence="2">
    <original>RR</original>
    <variation>EE</variation>
    <location>
        <begin position="206"/>
        <end position="207"/>
    </location>
</feature>
<feature type="mutagenesis site" description="Impairs DNA repair." evidence="2">
    <original>RY</original>
    <variation>GG</variation>
    <location>
        <begin position="209"/>
        <end position="210"/>
    </location>
</feature>
<feature type="mutagenesis site" description="Impairs DNA repair." evidence="2">
    <original>D</original>
    <variation>R</variation>
    <location>
        <position position="217"/>
    </location>
</feature>
<feature type="mutagenesis site" description="Impairs DNA repair." evidence="2">
    <original>AS</original>
    <variation>EY</variation>
    <location>
        <begin position="250"/>
        <end position="251"/>
    </location>
</feature>
<feature type="sequence conflict" description="In Ref. 2; AAH87397." evidence="3" ref="2">
    <original>S</original>
    <variation>F</variation>
    <location>
        <position position="203"/>
    </location>
</feature>
<evidence type="ECO:0000250" key="1">
    <source>
        <dbReference type="UniProtKB" id="P49842"/>
    </source>
</evidence>
<evidence type="ECO:0000269" key="2">
    <source>
    </source>
</evidence>
<evidence type="ECO:0000305" key="3"/>
<evidence type="ECO:0000312" key="4">
    <source>
        <dbReference type="EMBL" id="AAH87397.1"/>
    </source>
</evidence>
<evidence type="ECO:0000312" key="5">
    <source>
        <dbReference type="Proteomes" id="UP000186698"/>
    </source>
</evidence>
<evidence type="ECO:0000312" key="6">
    <source>
        <dbReference type="Proteomes" id="UP000694892"/>
    </source>
</evidence>
<evidence type="ECO:0000312" key="7">
    <source>
        <dbReference type="Xenbase" id="XB-GENE-865253"/>
    </source>
</evidence>
<name>WHR1_XENLA</name>
<comment type="function">
    <text evidence="2">DNA-binding protein which is required for efficient transcription-coupled nucleotide excision repair (TC-NER). Acts as part of a TC-NER complex which assembles and interacts with RNA polymerase II (RNAPII) when it stalls at DNA lesions.</text>
</comment>
<comment type="subunit">
    <text evidence="1 2">Monomer in solution (By similarity). Homodimer; when bound to DNA (By similarity). Component of a transcription-coupled nucleotide excision repair (TC-NER) complex which assembles and interacts with the multiprotein RNA polymerase II complex when it stalls at DNA lesions (PubMed:39547228).</text>
</comment>
<comment type="subcellular location">
    <subcellularLocation>
        <location evidence="1">Nucleus</location>
    </subcellularLocation>
</comment>
<comment type="similarity">
    <text evidence="3">Belongs to the STK19 family.</text>
</comment>
<comment type="caution">
    <text evidence="1">Was originally reported to be a serine/threonine-protein kinase. However, later studies have shown that the protein does not have kinase activity and is involved in transcription-coupled nucleotide excision repair.</text>
</comment>
<protein>
    <recommendedName>
        <fullName evidence="7">Winged helix repair factor 1</fullName>
    </recommendedName>
    <alternativeName>
        <fullName evidence="3">Inactive serine/threonine-protein kinase 19</fullName>
    </alternativeName>
</protein>
<sequence length="260" mass="29370">MDRKRKLICDAFKVKKLRGSCSRDETDLKTSTSPYPDFTEDPHGAVSYLCALFPRKLFNDTLPPLFLKHQLYSLMQDRTVVDRLLSSLQQKGEVCLVQTGFDLDTFMVVMTDDLRRTALSSSEGDSRATVVRKFLDCDLLLSPNISYGRDEMMMKHRFSDGEITQLVRAGLLTVRDAGSWWLAVPGAGRFITHFIKGRKALLSQIRRSRYKEVLLTDLSTRKAPPNLRLGMEFHIHDIIGAGLVDCVPTASGILLRISET</sequence>
<reference evidence="6" key="1">
    <citation type="journal article" date="2016" name="Nature">
        <title>Genome evolution in the allotetraploid frog Xenopus laevis.</title>
        <authorList>
            <person name="Session A.M."/>
            <person name="Uno Y."/>
            <person name="Kwon T."/>
            <person name="Chapman J.A."/>
            <person name="Toyoda A."/>
            <person name="Takahashi S."/>
            <person name="Fukui A."/>
            <person name="Hikosaka A."/>
            <person name="Suzuki A."/>
            <person name="Kondo M."/>
            <person name="van Heeringen S.J."/>
            <person name="Quigley I."/>
            <person name="Heinz S."/>
            <person name="Ogino H."/>
            <person name="Ochi H."/>
            <person name="Hellsten U."/>
            <person name="Lyons J.B."/>
            <person name="Simakov O."/>
            <person name="Putnam N."/>
            <person name="Stites J."/>
            <person name="Kuroki Y."/>
            <person name="Tanaka T."/>
            <person name="Michiue T."/>
            <person name="Watanabe M."/>
            <person name="Bogdanovic O."/>
            <person name="Lister R."/>
            <person name="Georgiou G."/>
            <person name="Paranjpe S.S."/>
            <person name="van Kruijsbergen I."/>
            <person name="Shu S."/>
            <person name="Carlson J."/>
            <person name="Kinoshita T."/>
            <person name="Ohta Y."/>
            <person name="Mawaribuchi S."/>
            <person name="Jenkins J."/>
            <person name="Grimwood J."/>
            <person name="Schmutz J."/>
            <person name="Mitros T."/>
            <person name="Mozaffari S.V."/>
            <person name="Suzuki Y."/>
            <person name="Haramoto Y."/>
            <person name="Yamamoto T.S."/>
            <person name="Takagi C."/>
            <person name="Heald R."/>
            <person name="Miller K."/>
            <person name="Haudenschild C."/>
            <person name="Kitzman J."/>
            <person name="Nakayama T."/>
            <person name="Izutsu Y."/>
            <person name="Robert J."/>
            <person name="Fortriede J."/>
            <person name="Burns K."/>
            <person name="Lotay V."/>
            <person name="Karimi K."/>
            <person name="Yasuoka Y."/>
            <person name="Dichmann D.S."/>
            <person name="Flajnik M.F."/>
            <person name="Houston D.W."/>
            <person name="Shendure J."/>
            <person name="DuPasquier L."/>
            <person name="Vize P.D."/>
            <person name="Zorn A.M."/>
            <person name="Ito M."/>
            <person name="Marcotte E.M."/>
            <person name="Wallingford J.B."/>
            <person name="Ito Y."/>
            <person name="Asashima M."/>
            <person name="Ueno N."/>
            <person name="Matsuda Y."/>
            <person name="Veenstra G.J."/>
            <person name="Fujiyama A."/>
            <person name="Harland R.M."/>
            <person name="Taira M."/>
            <person name="Rokhsar D.S."/>
        </authorList>
    </citation>
    <scope>NUCLEOTIDE SEQUENCE [LARGE SCALE GENOMIC DNA]</scope>
    <source>
        <strain evidence="6">J</strain>
    </source>
</reference>
<reference evidence="4" key="2">
    <citation type="submission" date="2004-12" db="EMBL/GenBank/DDBJ databases">
        <authorList>
            <consortium name="NIH - Xenopus Gene Collection (XGC) project"/>
        </authorList>
    </citation>
    <scope>NUCLEOTIDE SEQUENCE [LARGE SCALE MRNA]</scope>
    <source>
        <tissue evidence="4">Testis</tissue>
    </source>
</reference>
<reference evidence="3" key="3">
    <citation type="journal article" date="2024" name="Cell">
        <title>STK19 positions TFIIH for cell-free transcription-coupled DNA repair.</title>
        <authorList>
            <person name="Mevissen T.E.T."/>
            <person name="Kuemmecke M."/>
            <person name="Schmid E.W."/>
            <person name="Farnung L."/>
            <person name="Walter J.C."/>
        </authorList>
    </citation>
    <scope>FUNCTION</scope>
    <scope>IDENTIFICATION IN TC-NER COMPLEX</scope>
    <scope>MUTAGENESIS OF 78-ARG--ARG-83; 82-ASP-ARG-83; 206-ARG-ARG-207; 209-ARG-TYR-210; ASP-217 AND 250-ALA-SER-251</scope>
</reference>
<dbReference type="EMBL" id="CM004480">
    <property type="protein sequence ID" value="OCT67877.1"/>
    <property type="molecule type" value="Genomic_DNA"/>
</dbReference>
<dbReference type="EMBL" id="BC087397">
    <property type="protein sequence ID" value="AAH87397.1"/>
    <property type="molecule type" value="mRNA"/>
</dbReference>
<dbReference type="RefSeq" id="XP_018084623.1">
    <property type="nucleotide sequence ID" value="XM_018229134.2"/>
</dbReference>
<dbReference type="DNASU" id="496007"/>
<dbReference type="GeneID" id="496007"/>
<dbReference type="KEGG" id="xla:496007"/>
<dbReference type="AGR" id="Xenbase:XB-GENE-865253"/>
<dbReference type="CTD" id="496007"/>
<dbReference type="Xenbase" id="XB-GENE-865253">
    <property type="gene designation" value="whr1.L"/>
</dbReference>
<dbReference type="OrthoDB" id="3127689at2759"/>
<dbReference type="Proteomes" id="UP000186698">
    <property type="component" value="Chromosome 8L"/>
</dbReference>
<dbReference type="Proteomes" id="UP000694892">
    <property type="component" value="Chromosome 8L"/>
</dbReference>
<dbReference type="Bgee" id="496007">
    <property type="expression patterns" value="Expressed in testis and 20 other cell types or tissues"/>
</dbReference>
<dbReference type="GO" id="GO:0016301">
    <property type="term" value="F:kinase activity"/>
    <property type="evidence" value="ECO:0007669"/>
    <property type="project" value="UniProtKB-KW"/>
</dbReference>
<dbReference type="GO" id="GO:0046579">
    <property type="term" value="P:positive regulation of Ras protein signal transduction"/>
    <property type="evidence" value="ECO:0000318"/>
    <property type="project" value="GO_Central"/>
</dbReference>
<dbReference type="InterPro" id="IPR018865">
    <property type="entry name" value="STK19-like"/>
</dbReference>
<dbReference type="PANTHER" id="PTHR15243">
    <property type="entry name" value="SERINE/THREONINE-PROTEIN KINASE 19"/>
    <property type="match status" value="1"/>
</dbReference>
<dbReference type="PANTHER" id="PTHR15243:SF0">
    <property type="entry name" value="SERINE_THREONINE-PROTEIN KINASE 19"/>
    <property type="match status" value="1"/>
</dbReference>
<dbReference type="Pfam" id="PF10494">
    <property type="entry name" value="Stk19"/>
    <property type="match status" value="1"/>
</dbReference>
<keyword id="KW-0227">DNA damage</keyword>
<keyword id="KW-0234">DNA repair</keyword>
<keyword id="KW-0238">DNA-binding</keyword>
<keyword id="KW-0539">Nucleus</keyword>
<keyword id="KW-1185">Reference proteome</keyword>
<keyword id="KW-0677">Repeat</keyword>
<accession>A0A1L8F8I9</accession>
<accession>A0A974H7K9</accession>
<accession>Q5PQ22</accession>
<gene>
    <name evidence="7" type="primary">whr1.L</name>
    <name evidence="7" type="synonym">stk19.L</name>
</gene>
<organism evidence="5">
    <name type="scientific">Xenopus laevis</name>
    <name type="common">African clawed frog</name>
    <dbReference type="NCBI Taxonomy" id="8355"/>
    <lineage>
        <taxon>Eukaryota</taxon>
        <taxon>Metazoa</taxon>
        <taxon>Chordata</taxon>
        <taxon>Craniata</taxon>
        <taxon>Vertebrata</taxon>
        <taxon>Euteleostomi</taxon>
        <taxon>Amphibia</taxon>
        <taxon>Batrachia</taxon>
        <taxon>Anura</taxon>
        <taxon>Pipoidea</taxon>
        <taxon>Pipidae</taxon>
        <taxon>Xenopodinae</taxon>
        <taxon>Xenopus</taxon>
        <taxon>Xenopus</taxon>
    </lineage>
</organism>